<proteinExistence type="predicted"/>
<gene>
    <name evidence="2" type="ORF">B0252.5</name>
</gene>
<protein>
    <recommendedName>
        <fullName>Uncharacterized protein B0252.5</fullName>
    </recommendedName>
</protein>
<sequence length="209" mass="23593">MMRTNAGKETKGYNPAPADSGVPRKCVIIRKKKVGENMEKIELRYVAYSRIDKGSRSTTMEAINHAAAYFRERAGDLDYQDEPSSKSTCQKTFTVVKSEEKEKKKLEQCLPILLNIRARFAENEKNKSYSIHKRNQNGALKALCDEIVEESTYVLNNGHPVSSDLIKKIANINTLSRQVIANETKMENLVQDEFELAASKSKTSDKVSK</sequence>
<name>YT15_CAEEL</name>
<dbReference type="EMBL" id="BX284602">
    <property type="protein sequence ID" value="CCD61543.2"/>
    <property type="molecule type" value="Genomic_DNA"/>
</dbReference>
<dbReference type="PIR" id="T15293">
    <property type="entry name" value="T15293"/>
</dbReference>
<dbReference type="RefSeq" id="NP_001364679.1">
    <property type="nucleotide sequence ID" value="NM_001377812.1"/>
</dbReference>
<dbReference type="RefSeq" id="NP_495418.1">
    <property type="nucleotide sequence ID" value="NM_063017.1"/>
</dbReference>
<dbReference type="FunCoup" id="Q10918">
    <property type="interactions" value="1566"/>
</dbReference>
<dbReference type="STRING" id="6239.B0252.5.1"/>
<dbReference type="PaxDb" id="6239-B0252.5"/>
<dbReference type="PeptideAtlas" id="Q10918"/>
<dbReference type="EnsemblMetazoa" id="B0252.5.1">
    <property type="protein sequence ID" value="B0252.5.1"/>
    <property type="gene ID" value="WBGene00015089"/>
</dbReference>
<dbReference type="GeneID" id="181888"/>
<dbReference type="UCSC" id="B0252.5">
    <property type="organism name" value="c. elegans"/>
</dbReference>
<dbReference type="AGR" id="WB:WBGene00015089"/>
<dbReference type="WormBase" id="B0252.5">
    <property type="protein sequence ID" value="CE53889"/>
    <property type="gene ID" value="WBGene00015089"/>
</dbReference>
<dbReference type="eggNOG" id="ENOG502TFPR">
    <property type="taxonomic scope" value="Eukaryota"/>
</dbReference>
<dbReference type="HOGENOM" id="CLU_080528_0_0_1"/>
<dbReference type="InParanoid" id="Q10918"/>
<dbReference type="OrthoDB" id="5796954at2759"/>
<dbReference type="PRO" id="PR:Q10918"/>
<dbReference type="Proteomes" id="UP000001940">
    <property type="component" value="Chromosome II"/>
</dbReference>
<dbReference type="Bgee" id="WBGene00015089">
    <property type="expression patterns" value="Expressed in adult organism and 1 other cell type or tissue"/>
</dbReference>
<reference key="1">
    <citation type="journal article" date="1998" name="Science">
        <title>Genome sequence of the nematode C. elegans: a platform for investigating biology.</title>
        <authorList>
            <consortium name="The C. elegans sequencing consortium"/>
        </authorList>
    </citation>
    <scope>NUCLEOTIDE SEQUENCE [LARGE SCALE GENOMIC DNA]</scope>
    <source>
        <strain>Bristol N2</strain>
    </source>
</reference>
<feature type="chain" id="PRO_0000065052" description="Uncharacterized protein B0252.5">
    <location>
        <begin position="1"/>
        <end position="209"/>
    </location>
</feature>
<feature type="region of interest" description="Disordered" evidence="1">
    <location>
        <begin position="1"/>
        <end position="20"/>
    </location>
</feature>
<feature type="compositionally biased region" description="Basic and acidic residues" evidence="1">
    <location>
        <begin position="1"/>
        <end position="11"/>
    </location>
</feature>
<keyword id="KW-1185">Reference proteome</keyword>
<evidence type="ECO:0000256" key="1">
    <source>
        <dbReference type="SAM" id="MobiDB-lite"/>
    </source>
</evidence>
<evidence type="ECO:0000312" key="2">
    <source>
        <dbReference type="WormBase" id="B0252.5"/>
    </source>
</evidence>
<organism>
    <name type="scientific">Caenorhabditis elegans</name>
    <dbReference type="NCBI Taxonomy" id="6239"/>
    <lineage>
        <taxon>Eukaryota</taxon>
        <taxon>Metazoa</taxon>
        <taxon>Ecdysozoa</taxon>
        <taxon>Nematoda</taxon>
        <taxon>Chromadorea</taxon>
        <taxon>Rhabditida</taxon>
        <taxon>Rhabditina</taxon>
        <taxon>Rhabditomorpha</taxon>
        <taxon>Rhabditoidea</taxon>
        <taxon>Rhabditidae</taxon>
        <taxon>Peloderinae</taxon>
        <taxon>Caenorhabditis</taxon>
    </lineage>
</organism>
<accession>Q10918</accession>